<sequence>MATTKPYRVLLYYMYTTIENPEEFAAEHLAFCNSLELKGRILVAKEGINGTCSGTVEQTEKYMEAMNNDPRFDGIVFKIDEADGHAFKKMHVRPRPELVTLRLEDDINPHEITGKYLEPKDFYEAMKQEDTVIIDARNDYEFDLGHFKGAIKPDIESFRELPDWIRENKEVLEGKKILTYCTGGIRCEKFSGWLVREGYEDVSQLHGGIVTYGKDPEVQGELWDGQCYVFDERIAVPVNQKEHVIVGKDHFTGEPCERYVNCSNPECNKKILCSEENEAKYLRACSHECRVSPRNRYVIQHELTEEQVAAALEKIEAGK</sequence>
<proteinExistence type="inferred from homology"/>
<reference key="1">
    <citation type="submission" date="2008-10" db="EMBL/GenBank/DDBJ databases">
        <title>Genome sequence of Bacillus cereus AH187.</title>
        <authorList>
            <person name="Dodson R.J."/>
            <person name="Durkin A.S."/>
            <person name="Rosovitz M.J."/>
            <person name="Rasko D.A."/>
            <person name="Kolsto A.B."/>
            <person name="Okstad O.A."/>
            <person name="Ravel J."/>
            <person name="Sutton G."/>
        </authorList>
    </citation>
    <scope>NUCLEOTIDE SEQUENCE [LARGE SCALE GENOMIC DNA]</scope>
    <source>
        <strain>AH187</strain>
    </source>
</reference>
<evidence type="ECO:0000255" key="1">
    <source>
        <dbReference type="HAMAP-Rule" id="MF_00469"/>
    </source>
</evidence>
<protein>
    <recommendedName>
        <fullName evidence="1">tRNA uridine(34) hydroxylase</fullName>
        <ecNumber evidence="1">1.14.-.-</ecNumber>
    </recommendedName>
    <alternativeName>
        <fullName evidence="1">tRNA hydroxylation protein O</fullName>
    </alternativeName>
</protein>
<accession>B7HMP7</accession>
<dbReference type="EC" id="1.14.-.-" evidence="1"/>
<dbReference type="EMBL" id="CP001177">
    <property type="protein sequence ID" value="ACJ77556.1"/>
    <property type="molecule type" value="Genomic_DNA"/>
</dbReference>
<dbReference type="SMR" id="B7HMP7"/>
<dbReference type="KEGG" id="bcr:BCAH187_A1989"/>
<dbReference type="HOGENOM" id="CLU_038878_1_0_9"/>
<dbReference type="Proteomes" id="UP000002214">
    <property type="component" value="Chromosome"/>
</dbReference>
<dbReference type="GO" id="GO:0016705">
    <property type="term" value="F:oxidoreductase activity, acting on paired donors, with incorporation or reduction of molecular oxygen"/>
    <property type="evidence" value="ECO:0007669"/>
    <property type="project" value="UniProtKB-UniRule"/>
</dbReference>
<dbReference type="GO" id="GO:0006400">
    <property type="term" value="P:tRNA modification"/>
    <property type="evidence" value="ECO:0007669"/>
    <property type="project" value="UniProtKB-UniRule"/>
</dbReference>
<dbReference type="CDD" id="cd01518">
    <property type="entry name" value="RHOD_YceA"/>
    <property type="match status" value="1"/>
</dbReference>
<dbReference type="Gene3D" id="3.30.70.100">
    <property type="match status" value="1"/>
</dbReference>
<dbReference type="Gene3D" id="3.40.250.10">
    <property type="entry name" value="Rhodanese-like domain"/>
    <property type="match status" value="1"/>
</dbReference>
<dbReference type="HAMAP" id="MF_00469">
    <property type="entry name" value="TrhO"/>
    <property type="match status" value="1"/>
</dbReference>
<dbReference type="InterPro" id="IPR001763">
    <property type="entry name" value="Rhodanese-like_dom"/>
</dbReference>
<dbReference type="InterPro" id="IPR036873">
    <property type="entry name" value="Rhodanese-like_dom_sf"/>
</dbReference>
<dbReference type="InterPro" id="IPR022111">
    <property type="entry name" value="Rhodanese_C"/>
</dbReference>
<dbReference type="InterPro" id="IPR020936">
    <property type="entry name" value="TrhO"/>
</dbReference>
<dbReference type="InterPro" id="IPR040503">
    <property type="entry name" value="TRHO_N"/>
</dbReference>
<dbReference type="NCBIfam" id="NF001135">
    <property type="entry name" value="PRK00142.1-3"/>
    <property type="match status" value="1"/>
</dbReference>
<dbReference type="PANTHER" id="PTHR43268:SF3">
    <property type="entry name" value="RHODANESE-LIKE DOMAIN-CONTAINING PROTEIN 7-RELATED"/>
    <property type="match status" value="1"/>
</dbReference>
<dbReference type="PANTHER" id="PTHR43268">
    <property type="entry name" value="THIOSULFATE SULFURTRANSFERASE/RHODANESE-LIKE DOMAIN-CONTAINING PROTEIN 2"/>
    <property type="match status" value="1"/>
</dbReference>
<dbReference type="Pfam" id="PF00581">
    <property type="entry name" value="Rhodanese"/>
    <property type="match status" value="1"/>
</dbReference>
<dbReference type="Pfam" id="PF12368">
    <property type="entry name" value="Rhodanese_C"/>
    <property type="match status" value="1"/>
</dbReference>
<dbReference type="Pfam" id="PF17773">
    <property type="entry name" value="UPF0176_N"/>
    <property type="match status" value="1"/>
</dbReference>
<dbReference type="SMART" id="SM00450">
    <property type="entry name" value="RHOD"/>
    <property type="match status" value="1"/>
</dbReference>
<dbReference type="SUPFAM" id="SSF52821">
    <property type="entry name" value="Rhodanese/Cell cycle control phosphatase"/>
    <property type="match status" value="1"/>
</dbReference>
<dbReference type="PROSITE" id="PS50206">
    <property type="entry name" value="RHODANESE_3"/>
    <property type="match status" value="1"/>
</dbReference>
<feature type="chain" id="PRO_1000200337" description="tRNA uridine(34) hydroxylase">
    <location>
        <begin position="1"/>
        <end position="319"/>
    </location>
</feature>
<feature type="domain" description="Rhodanese" evidence="1">
    <location>
        <begin position="127"/>
        <end position="221"/>
    </location>
</feature>
<feature type="active site" description="Cysteine persulfide intermediate" evidence="1">
    <location>
        <position position="181"/>
    </location>
</feature>
<keyword id="KW-0560">Oxidoreductase</keyword>
<keyword id="KW-0819">tRNA processing</keyword>
<comment type="function">
    <text evidence="1">Catalyzes oxygen-dependent 5-hydroxyuridine (ho5U) modification at position 34 in tRNAs.</text>
</comment>
<comment type="catalytic activity">
    <reaction evidence="1">
        <text>uridine(34) in tRNA + AH2 + O2 = 5-hydroxyuridine(34) in tRNA + A + H2O</text>
        <dbReference type="Rhea" id="RHEA:64224"/>
        <dbReference type="Rhea" id="RHEA-COMP:11727"/>
        <dbReference type="Rhea" id="RHEA-COMP:13381"/>
        <dbReference type="ChEBI" id="CHEBI:13193"/>
        <dbReference type="ChEBI" id="CHEBI:15377"/>
        <dbReference type="ChEBI" id="CHEBI:15379"/>
        <dbReference type="ChEBI" id="CHEBI:17499"/>
        <dbReference type="ChEBI" id="CHEBI:65315"/>
        <dbReference type="ChEBI" id="CHEBI:136877"/>
    </reaction>
</comment>
<comment type="similarity">
    <text evidence="1">Belongs to the TrhO family.</text>
</comment>
<name>TRHO_BACC7</name>
<organism>
    <name type="scientific">Bacillus cereus (strain AH187)</name>
    <dbReference type="NCBI Taxonomy" id="405534"/>
    <lineage>
        <taxon>Bacteria</taxon>
        <taxon>Bacillati</taxon>
        <taxon>Bacillota</taxon>
        <taxon>Bacilli</taxon>
        <taxon>Bacillales</taxon>
        <taxon>Bacillaceae</taxon>
        <taxon>Bacillus</taxon>
        <taxon>Bacillus cereus group</taxon>
    </lineage>
</organism>
<gene>
    <name evidence="1" type="primary">trhO</name>
    <name type="ordered locus">BCAH187_A1989</name>
</gene>